<organism>
    <name type="scientific">Kluyveromyces lactis (strain ATCC 8585 / CBS 2359 / DSM 70799 / NBRC 1267 / NRRL Y-1140 / WM37)</name>
    <name type="common">Yeast</name>
    <name type="synonym">Candida sphaerica</name>
    <dbReference type="NCBI Taxonomy" id="284590"/>
    <lineage>
        <taxon>Eukaryota</taxon>
        <taxon>Fungi</taxon>
        <taxon>Dikarya</taxon>
        <taxon>Ascomycota</taxon>
        <taxon>Saccharomycotina</taxon>
        <taxon>Saccharomycetes</taxon>
        <taxon>Saccharomycetales</taxon>
        <taxon>Saccharomycetaceae</taxon>
        <taxon>Kluyveromyces</taxon>
    </lineage>
</organism>
<protein>
    <recommendedName>
        <fullName>Protein SBE2</fullName>
    </recommendedName>
</protein>
<reference key="1">
    <citation type="journal article" date="2004" name="Nature">
        <title>Genome evolution in yeasts.</title>
        <authorList>
            <person name="Dujon B."/>
            <person name="Sherman D."/>
            <person name="Fischer G."/>
            <person name="Durrens P."/>
            <person name="Casaregola S."/>
            <person name="Lafontaine I."/>
            <person name="de Montigny J."/>
            <person name="Marck C."/>
            <person name="Neuveglise C."/>
            <person name="Talla E."/>
            <person name="Goffard N."/>
            <person name="Frangeul L."/>
            <person name="Aigle M."/>
            <person name="Anthouard V."/>
            <person name="Babour A."/>
            <person name="Barbe V."/>
            <person name="Barnay S."/>
            <person name="Blanchin S."/>
            <person name="Beckerich J.-M."/>
            <person name="Beyne E."/>
            <person name="Bleykasten C."/>
            <person name="Boisrame A."/>
            <person name="Boyer J."/>
            <person name="Cattolico L."/>
            <person name="Confanioleri F."/>
            <person name="de Daruvar A."/>
            <person name="Despons L."/>
            <person name="Fabre E."/>
            <person name="Fairhead C."/>
            <person name="Ferry-Dumazet H."/>
            <person name="Groppi A."/>
            <person name="Hantraye F."/>
            <person name="Hennequin C."/>
            <person name="Jauniaux N."/>
            <person name="Joyet P."/>
            <person name="Kachouri R."/>
            <person name="Kerrest A."/>
            <person name="Koszul R."/>
            <person name="Lemaire M."/>
            <person name="Lesur I."/>
            <person name="Ma L."/>
            <person name="Muller H."/>
            <person name="Nicaud J.-M."/>
            <person name="Nikolski M."/>
            <person name="Oztas S."/>
            <person name="Ozier-Kalogeropoulos O."/>
            <person name="Pellenz S."/>
            <person name="Potier S."/>
            <person name="Richard G.-F."/>
            <person name="Straub M.-L."/>
            <person name="Suleau A."/>
            <person name="Swennen D."/>
            <person name="Tekaia F."/>
            <person name="Wesolowski-Louvel M."/>
            <person name="Westhof E."/>
            <person name="Wirth B."/>
            <person name="Zeniou-Meyer M."/>
            <person name="Zivanovic Y."/>
            <person name="Bolotin-Fukuhara M."/>
            <person name="Thierry A."/>
            <person name="Bouchier C."/>
            <person name="Caudron B."/>
            <person name="Scarpelli C."/>
            <person name="Gaillardin C."/>
            <person name="Weissenbach J."/>
            <person name="Wincker P."/>
            <person name="Souciet J.-L."/>
        </authorList>
    </citation>
    <scope>NUCLEOTIDE SEQUENCE [LARGE SCALE GENOMIC DNA]</scope>
    <source>
        <strain>ATCC 8585 / CBS 2359 / DSM 70799 / NBRC 1267 / NRRL Y-1140 / WM37</strain>
    </source>
</reference>
<keyword id="KW-0961">Cell wall biogenesis/degradation</keyword>
<keyword id="KW-0333">Golgi apparatus</keyword>
<keyword id="KW-0653">Protein transport</keyword>
<keyword id="KW-1185">Reference proteome</keyword>
<keyword id="KW-0813">Transport</keyword>
<proteinExistence type="inferred from homology"/>
<gene>
    <name type="primary">SBE2</name>
    <name type="ordered locus">KLLA0E21758g</name>
</gene>
<sequence>MVAARPRKAGTYPTTAQVPSSANASSISSYTNSSNSKTVGSGITRRPSENMLLNMAEGKQSQNQNQQQQQQQHQTHNPRSSANGSEESDHVLSFKPPNRKAVLIKNERPISNDSINTEGDVFSINAGSSKDSSRGTSIIDDDDDENHDTEQSAVLDGKVSANVMPRGKKSFSSVKQNPVTPHSSVTDGLDDVSHLTDTSFSDADLSVTTVKVASAPKSMNTKYIFNNPGSQGKSVAPDAFQSVDSSPKLTRSMFSTVNPTAMHSSYDQHSQLHGQSQPLHNTHPLATSLHSKSVPALPSDSLNGKKPLTPSQRYRLRREQNKLHLQHSIKQKELFYDEDAKLPANDLLDESLVWSIPTASHSSTFISQRKHRASVPNVGRSAKLLDGHDMPPSPIPGVQKVSDLEYFQQVGKNLSAVYQKSEYEVTKSKLLERTQSAELLPLDFKNASVEGMEDLKLVSDDKVSIISSTRPCWLPPKDTEERRSHERDVRKTLSMASIEKLETNQRRHEQEIKNETNNQKLVLLIDRGLNRKSSLQDLKKIAWETGFSSARRSFIYNTVLNTDFNIISTKYMDDTSSLDNIIRSKMTPFPSTQMAEINKLVDDMHFPVESQIRSKLIKLLQWKSISRFGLQTGDNYLMLHFLLEGYDLELIWKLANLLQLTCFNSITRDKYDNRIMNRDGVVGRYMRKDSAFAEEFDSRYLNYMTFWNCLARVDHDLFIWIMDIIVAENARASRWTEEWQHQLRNTDWDTFKEKYIVVNYKVLCSLSLNVLLRYHFGWNNLLHLDELPPSFQLVKPVDNREPVSDQYLVFIKKWNHYYAKF</sequence>
<name>SBE2_KLULA</name>
<accession>Q6CMA8</accession>
<evidence type="ECO:0000250" key="1"/>
<evidence type="ECO:0000256" key="2">
    <source>
        <dbReference type="SAM" id="MobiDB-lite"/>
    </source>
</evidence>
<evidence type="ECO:0000305" key="3"/>
<comment type="function">
    <text evidence="1">With SBE22, is involved in cell wall integrity and polarity processes like bud growth.</text>
</comment>
<comment type="subcellular location">
    <subcellularLocation>
        <location evidence="1">Golgi apparatus</location>
    </subcellularLocation>
</comment>
<comment type="similarity">
    <text evidence="3">Belongs to the SBE2 family.</text>
</comment>
<dbReference type="EMBL" id="CR382125">
    <property type="protein sequence ID" value="CAH00018.1"/>
    <property type="molecule type" value="Genomic_DNA"/>
</dbReference>
<dbReference type="RefSeq" id="XP_454931.1">
    <property type="nucleotide sequence ID" value="XM_454931.1"/>
</dbReference>
<dbReference type="SMR" id="Q6CMA8"/>
<dbReference type="FunCoup" id="Q6CMA8">
    <property type="interactions" value="39"/>
</dbReference>
<dbReference type="STRING" id="284590.Q6CMA8"/>
<dbReference type="PaxDb" id="284590-Q6CMA8"/>
<dbReference type="KEGG" id="kla:KLLA0_E21671g"/>
<dbReference type="eggNOG" id="ENOG502QR4N">
    <property type="taxonomic scope" value="Eukaryota"/>
</dbReference>
<dbReference type="HOGENOM" id="CLU_019068_0_0_1"/>
<dbReference type="InParanoid" id="Q6CMA8"/>
<dbReference type="OMA" id="SSTRPIW"/>
<dbReference type="Proteomes" id="UP000000598">
    <property type="component" value="Chromosome E"/>
</dbReference>
<dbReference type="GO" id="GO:0005794">
    <property type="term" value="C:Golgi apparatus"/>
    <property type="evidence" value="ECO:0007669"/>
    <property type="project" value="UniProtKB-SubCell"/>
</dbReference>
<dbReference type="GO" id="GO:0031505">
    <property type="term" value="P:fungal-type cell wall organization"/>
    <property type="evidence" value="ECO:0007669"/>
    <property type="project" value="InterPro"/>
</dbReference>
<dbReference type="GO" id="GO:0015031">
    <property type="term" value="P:protein transport"/>
    <property type="evidence" value="ECO:0007669"/>
    <property type="project" value="UniProtKB-KW"/>
</dbReference>
<dbReference type="InterPro" id="IPR031403">
    <property type="entry name" value="Sbe2/Sbe22_C"/>
</dbReference>
<dbReference type="InterPro" id="IPR053949">
    <property type="entry name" value="SBE2/SBE22_M"/>
</dbReference>
<dbReference type="InterPro" id="IPR053948">
    <property type="entry name" value="SBE2/SBE22_N"/>
</dbReference>
<dbReference type="Pfam" id="PF17076">
    <property type="entry name" value="SBE2_C"/>
    <property type="match status" value="1"/>
</dbReference>
<dbReference type="Pfam" id="PF22874">
    <property type="entry name" value="SBE2_M"/>
    <property type="match status" value="1"/>
</dbReference>
<dbReference type="Pfam" id="PF22876">
    <property type="entry name" value="SBE2_N"/>
    <property type="match status" value="1"/>
</dbReference>
<feature type="chain" id="PRO_0000320505" description="Protein SBE2">
    <location>
        <begin position="1"/>
        <end position="821"/>
    </location>
</feature>
<feature type="region of interest" description="Disordered" evidence="2">
    <location>
        <begin position="1"/>
        <end position="151"/>
    </location>
</feature>
<feature type="region of interest" description="Disordered" evidence="2">
    <location>
        <begin position="169"/>
        <end position="188"/>
    </location>
</feature>
<feature type="region of interest" description="Disordered" evidence="2">
    <location>
        <begin position="264"/>
        <end position="311"/>
    </location>
</feature>
<feature type="compositionally biased region" description="Low complexity" evidence="2">
    <location>
        <begin position="20"/>
        <end position="36"/>
    </location>
</feature>
<feature type="compositionally biased region" description="Low complexity" evidence="2">
    <location>
        <begin position="60"/>
        <end position="74"/>
    </location>
</feature>
<feature type="compositionally biased region" description="Polar residues" evidence="2">
    <location>
        <begin position="75"/>
        <end position="85"/>
    </location>
</feature>
<feature type="compositionally biased region" description="Polar residues" evidence="2">
    <location>
        <begin position="125"/>
        <end position="136"/>
    </location>
</feature>
<feature type="compositionally biased region" description="Polar residues" evidence="2">
    <location>
        <begin position="170"/>
        <end position="186"/>
    </location>
</feature>
<feature type="compositionally biased region" description="Polar residues" evidence="2">
    <location>
        <begin position="264"/>
        <end position="291"/>
    </location>
</feature>